<proteinExistence type="inferred from homology"/>
<evidence type="ECO:0000255" key="1">
    <source>
        <dbReference type="HAMAP-Rule" id="MF_01283"/>
    </source>
</evidence>
<gene>
    <name evidence="1" type="primary">ribBA</name>
    <name type="ordered locus">SSP0997</name>
</gene>
<sequence>MQLDSIDTALQALKKGESIIVVDDENRENEGDLVAVTEWMNDNTVNFMATYGKGLICAPISNAIAEKLDLNPMVTHNSDVYGTQFTVSVDHIQTTTGISADERTMTARALIDEQATGSDFNKPGHLFPLIAQDNGVLSRRGHTEASVDLAKLTGAKPAALICEIMDEDGTMAKGASLEAFKETHGLVMISIEDLEKYRKSSISKLDAKAKVKMPTEYGNFDMYGFTTDNSEEDIVVIANGDINKTENVRIHSACLTGDIFHSQRCDCGEQLAASMKYIAEHGGMILYLPQEGRGIGLINKLKAYELIEQGYDTVSANIALGFEEDLRDYQNAAQILKYFGVDSVNLLSNNPKKFESLESYGIHIAKRIELIVPTNAYNQDYMDTKKEKMGHLI</sequence>
<accession>Q49YJ7</accession>
<reference key="1">
    <citation type="journal article" date="2005" name="Proc. Natl. Acad. Sci. U.S.A.">
        <title>Whole genome sequence of Staphylococcus saprophyticus reveals the pathogenesis of uncomplicated urinary tract infection.</title>
        <authorList>
            <person name="Kuroda M."/>
            <person name="Yamashita A."/>
            <person name="Hirakawa H."/>
            <person name="Kumano M."/>
            <person name="Morikawa K."/>
            <person name="Higashide M."/>
            <person name="Maruyama A."/>
            <person name="Inose Y."/>
            <person name="Matoba K."/>
            <person name="Toh H."/>
            <person name="Kuhara S."/>
            <person name="Hattori M."/>
            <person name="Ohta T."/>
        </authorList>
    </citation>
    <scope>NUCLEOTIDE SEQUENCE [LARGE SCALE GENOMIC DNA]</scope>
    <source>
        <strain>ATCC 15305 / DSM 20229 / NCIMB 8711 / NCTC 7292 / S-41</strain>
    </source>
</reference>
<organism>
    <name type="scientific">Staphylococcus saprophyticus subsp. saprophyticus (strain ATCC 15305 / DSM 20229 / NCIMB 8711 / NCTC 7292 / S-41)</name>
    <dbReference type="NCBI Taxonomy" id="342451"/>
    <lineage>
        <taxon>Bacteria</taxon>
        <taxon>Bacillati</taxon>
        <taxon>Bacillota</taxon>
        <taxon>Bacilli</taxon>
        <taxon>Bacillales</taxon>
        <taxon>Staphylococcaceae</taxon>
        <taxon>Staphylococcus</taxon>
    </lineage>
</organism>
<comment type="function">
    <text evidence="1">Catalyzes the conversion of D-ribulose 5-phosphate to formate and 3,4-dihydroxy-2-butanone 4-phosphate.</text>
</comment>
<comment type="function">
    <text evidence="1">Catalyzes the conversion of GTP to 2,5-diamino-6-ribosylamino-4(3H)-pyrimidinone 5'-phosphate (DARP), formate and pyrophosphate.</text>
</comment>
<comment type="catalytic activity">
    <reaction evidence="1">
        <text>D-ribulose 5-phosphate = (2S)-2-hydroxy-3-oxobutyl phosphate + formate + H(+)</text>
        <dbReference type="Rhea" id="RHEA:18457"/>
        <dbReference type="ChEBI" id="CHEBI:15378"/>
        <dbReference type="ChEBI" id="CHEBI:15740"/>
        <dbReference type="ChEBI" id="CHEBI:58121"/>
        <dbReference type="ChEBI" id="CHEBI:58830"/>
        <dbReference type="EC" id="4.1.99.12"/>
    </reaction>
</comment>
<comment type="catalytic activity">
    <reaction evidence="1">
        <text>GTP + 4 H2O = 2,5-diamino-6-hydroxy-4-(5-phosphoribosylamino)-pyrimidine + formate + 2 phosphate + 3 H(+)</text>
        <dbReference type="Rhea" id="RHEA:23704"/>
        <dbReference type="ChEBI" id="CHEBI:15377"/>
        <dbReference type="ChEBI" id="CHEBI:15378"/>
        <dbReference type="ChEBI" id="CHEBI:15740"/>
        <dbReference type="ChEBI" id="CHEBI:37565"/>
        <dbReference type="ChEBI" id="CHEBI:43474"/>
        <dbReference type="ChEBI" id="CHEBI:58614"/>
        <dbReference type="EC" id="3.5.4.25"/>
    </reaction>
</comment>
<comment type="cofactor">
    <cofactor evidence="1">
        <name>Mg(2+)</name>
        <dbReference type="ChEBI" id="CHEBI:18420"/>
    </cofactor>
    <cofactor evidence="1">
        <name>Mn(2+)</name>
        <dbReference type="ChEBI" id="CHEBI:29035"/>
    </cofactor>
    <text evidence="1">Binds 2 divalent metal cations per subunit. Magnesium or manganese.</text>
</comment>
<comment type="cofactor">
    <cofactor evidence="1">
        <name>Zn(2+)</name>
        <dbReference type="ChEBI" id="CHEBI:29105"/>
    </cofactor>
    <text evidence="1">Binds 1 zinc ion per subunit.</text>
</comment>
<comment type="pathway">
    <text evidence="1">Cofactor biosynthesis; riboflavin biosynthesis; 2-hydroxy-3-oxobutyl phosphate from D-ribulose 5-phosphate: step 1/1.</text>
</comment>
<comment type="pathway">
    <text evidence="1">Cofactor biosynthesis; riboflavin biosynthesis; 5-amino-6-(D-ribitylamino)uracil from GTP: step 1/4.</text>
</comment>
<comment type="similarity">
    <text evidence="1">In the N-terminal section; belongs to the DHBP synthase family.</text>
</comment>
<comment type="similarity">
    <text evidence="1">In the C-terminal section; belongs to the GTP cyclohydrolase II family.</text>
</comment>
<feature type="chain" id="PRO_0000151742" description="Riboflavin biosynthesis protein RibBA">
    <location>
        <begin position="1"/>
        <end position="393"/>
    </location>
</feature>
<feature type="region of interest" description="DHBP synthase">
    <location>
        <begin position="1"/>
        <end position="200"/>
    </location>
</feature>
<feature type="region of interest" description="GTP cyclohydrolase II">
    <location>
        <begin position="201"/>
        <end position="393"/>
    </location>
</feature>
<feature type="active site" description="Proton acceptor; for GTP cyclohydrolase activity" evidence="1">
    <location>
        <position position="325"/>
    </location>
</feature>
<feature type="active site" description="Nucleophile; for GTP cyclohydrolase activity" evidence="1">
    <location>
        <position position="327"/>
    </location>
</feature>
<feature type="binding site" evidence="1">
    <location>
        <begin position="27"/>
        <end position="28"/>
    </location>
    <ligand>
        <name>D-ribulose 5-phosphate</name>
        <dbReference type="ChEBI" id="CHEBI:58121"/>
    </ligand>
</feature>
<feature type="binding site" evidence="1">
    <location>
        <position position="28"/>
    </location>
    <ligand>
        <name>Mg(2+)</name>
        <dbReference type="ChEBI" id="CHEBI:18420"/>
        <label>1</label>
    </ligand>
</feature>
<feature type="binding site" evidence="1">
    <location>
        <position position="28"/>
    </location>
    <ligand>
        <name>Mg(2+)</name>
        <dbReference type="ChEBI" id="CHEBI:18420"/>
        <label>2</label>
    </ligand>
</feature>
<feature type="binding site" evidence="1">
    <location>
        <position position="32"/>
    </location>
    <ligand>
        <name>D-ribulose 5-phosphate</name>
        <dbReference type="ChEBI" id="CHEBI:58121"/>
    </ligand>
</feature>
<feature type="binding site" evidence="1">
    <location>
        <begin position="139"/>
        <end position="143"/>
    </location>
    <ligand>
        <name>D-ribulose 5-phosphate</name>
        <dbReference type="ChEBI" id="CHEBI:58121"/>
    </ligand>
</feature>
<feature type="binding site" evidence="1">
    <location>
        <position position="142"/>
    </location>
    <ligand>
        <name>Mg(2+)</name>
        <dbReference type="ChEBI" id="CHEBI:18420"/>
        <label>2</label>
    </ligand>
</feature>
<feature type="binding site" evidence="1">
    <location>
        <position position="163"/>
    </location>
    <ligand>
        <name>D-ribulose 5-phosphate</name>
        <dbReference type="ChEBI" id="CHEBI:58121"/>
    </ligand>
</feature>
<feature type="binding site" evidence="1">
    <location>
        <begin position="249"/>
        <end position="253"/>
    </location>
    <ligand>
        <name>GTP</name>
        <dbReference type="ChEBI" id="CHEBI:37565"/>
    </ligand>
</feature>
<feature type="binding site" evidence="1">
    <location>
        <position position="254"/>
    </location>
    <ligand>
        <name>Zn(2+)</name>
        <dbReference type="ChEBI" id="CHEBI:29105"/>
        <note>catalytic</note>
    </ligand>
</feature>
<feature type="binding site" evidence="1">
    <location>
        <position position="265"/>
    </location>
    <ligand>
        <name>Zn(2+)</name>
        <dbReference type="ChEBI" id="CHEBI:29105"/>
        <note>catalytic</note>
    </ligand>
</feature>
<feature type="binding site" evidence="1">
    <location>
        <position position="267"/>
    </location>
    <ligand>
        <name>Zn(2+)</name>
        <dbReference type="ChEBI" id="CHEBI:29105"/>
        <note>catalytic</note>
    </ligand>
</feature>
<feature type="binding site" evidence="1">
    <location>
        <position position="270"/>
    </location>
    <ligand>
        <name>GTP</name>
        <dbReference type="ChEBI" id="CHEBI:37565"/>
    </ligand>
</feature>
<feature type="binding site" evidence="1">
    <location>
        <begin position="291"/>
        <end position="293"/>
    </location>
    <ligand>
        <name>GTP</name>
        <dbReference type="ChEBI" id="CHEBI:37565"/>
    </ligand>
</feature>
<feature type="binding site" evidence="1">
    <location>
        <position position="313"/>
    </location>
    <ligand>
        <name>GTP</name>
        <dbReference type="ChEBI" id="CHEBI:37565"/>
    </ligand>
</feature>
<feature type="binding site" evidence="1">
    <location>
        <position position="348"/>
    </location>
    <ligand>
        <name>GTP</name>
        <dbReference type="ChEBI" id="CHEBI:37565"/>
    </ligand>
</feature>
<feature type="binding site" evidence="1">
    <location>
        <position position="353"/>
    </location>
    <ligand>
        <name>GTP</name>
        <dbReference type="ChEBI" id="CHEBI:37565"/>
    </ligand>
</feature>
<feature type="site" description="Essential for DHBP synthase activity" evidence="1">
    <location>
        <position position="125"/>
    </location>
</feature>
<feature type="site" description="Essential for DHBP synthase activity" evidence="1">
    <location>
        <position position="163"/>
    </location>
</feature>
<name>RIBBA_STAS1</name>
<dbReference type="EC" id="4.1.99.12" evidence="1"/>
<dbReference type="EC" id="3.5.4.25" evidence="1"/>
<dbReference type="EMBL" id="AP008934">
    <property type="protein sequence ID" value="BAE18142.1"/>
    <property type="molecule type" value="Genomic_DNA"/>
</dbReference>
<dbReference type="SMR" id="Q49YJ7"/>
<dbReference type="GeneID" id="3615867"/>
<dbReference type="KEGG" id="ssp:SSP0997"/>
<dbReference type="PATRIC" id="fig|342451.11.peg.996"/>
<dbReference type="eggNOG" id="COG0108">
    <property type="taxonomic scope" value="Bacteria"/>
</dbReference>
<dbReference type="eggNOG" id="COG0807">
    <property type="taxonomic scope" value="Bacteria"/>
</dbReference>
<dbReference type="HOGENOM" id="CLU_020273_1_2_9"/>
<dbReference type="OrthoDB" id="9793111at2"/>
<dbReference type="UniPathway" id="UPA00275">
    <property type="reaction ID" value="UER00399"/>
</dbReference>
<dbReference type="UniPathway" id="UPA00275">
    <property type="reaction ID" value="UER00400"/>
</dbReference>
<dbReference type="Proteomes" id="UP000006371">
    <property type="component" value="Chromosome"/>
</dbReference>
<dbReference type="GO" id="GO:0005829">
    <property type="term" value="C:cytosol"/>
    <property type="evidence" value="ECO:0007669"/>
    <property type="project" value="TreeGrafter"/>
</dbReference>
<dbReference type="GO" id="GO:0008686">
    <property type="term" value="F:3,4-dihydroxy-2-butanone-4-phosphate synthase activity"/>
    <property type="evidence" value="ECO:0007669"/>
    <property type="project" value="UniProtKB-UniRule"/>
</dbReference>
<dbReference type="GO" id="GO:0005525">
    <property type="term" value="F:GTP binding"/>
    <property type="evidence" value="ECO:0007669"/>
    <property type="project" value="UniProtKB-KW"/>
</dbReference>
<dbReference type="GO" id="GO:0003935">
    <property type="term" value="F:GTP cyclohydrolase II activity"/>
    <property type="evidence" value="ECO:0007669"/>
    <property type="project" value="UniProtKB-UniRule"/>
</dbReference>
<dbReference type="GO" id="GO:0000287">
    <property type="term" value="F:magnesium ion binding"/>
    <property type="evidence" value="ECO:0007669"/>
    <property type="project" value="UniProtKB-UniRule"/>
</dbReference>
<dbReference type="GO" id="GO:0030145">
    <property type="term" value="F:manganese ion binding"/>
    <property type="evidence" value="ECO:0007669"/>
    <property type="project" value="UniProtKB-UniRule"/>
</dbReference>
<dbReference type="GO" id="GO:0008270">
    <property type="term" value="F:zinc ion binding"/>
    <property type="evidence" value="ECO:0007669"/>
    <property type="project" value="UniProtKB-UniRule"/>
</dbReference>
<dbReference type="GO" id="GO:0009231">
    <property type="term" value="P:riboflavin biosynthetic process"/>
    <property type="evidence" value="ECO:0007669"/>
    <property type="project" value="UniProtKB-UniRule"/>
</dbReference>
<dbReference type="CDD" id="cd00641">
    <property type="entry name" value="GTP_cyclohydro2"/>
    <property type="match status" value="1"/>
</dbReference>
<dbReference type="FunFam" id="3.40.50.10990:FF:000002">
    <property type="entry name" value="GTP cyclohydrolase-2"/>
    <property type="match status" value="1"/>
</dbReference>
<dbReference type="FunFam" id="3.90.870.10:FF:000001">
    <property type="entry name" value="Riboflavin biosynthesis protein RibBA"/>
    <property type="match status" value="1"/>
</dbReference>
<dbReference type="Gene3D" id="3.90.870.10">
    <property type="entry name" value="DHBP synthase"/>
    <property type="match status" value="1"/>
</dbReference>
<dbReference type="Gene3D" id="3.40.50.10990">
    <property type="entry name" value="GTP cyclohydrolase II"/>
    <property type="match status" value="1"/>
</dbReference>
<dbReference type="HAMAP" id="MF_00179">
    <property type="entry name" value="RibA"/>
    <property type="match status" value="1"/>
</dbReference>
<dbReference type="HAMAP" id="MF_00180">
    <property type="entry name" value="RibB"/>
    <property type="match status" value="1"/>
</dbReference>
<dbReference type="HAMAP" id="MF_01283">
    <property type="entry name" value="RibBA"/>
    <property type="match status" value="1"/>
</dbReference>
<dbReference type="InterPro" id="IPR017945">
    <property type="entry name" value="DHBP_synth_RibB-like_a/b_dom"/>
</dbReference>
<dbReference type="InterPro" id="IPR000422">
    <property type="entry name" value="DHBP_synthase_RibB"/>
</dbReference>
<dbReference type="InterPro" id="IPR032677">
    <property type="entry name" value="GTP_cyclohydro_II"/>
</dbReference>
<dbReference type="InterPro" id="IPR000926">
    <property type="entry name" value="RibA"/>
</dbReference>
<dbReference type="InterPro" id="IPR036144">
    <property type="entry name" value="RibA-like_sf"/>
</dbReference>
<dbReference type="InterPro" id="IPR016299">
    <property type="entry name" value="Riboflavin_synth_RibBA"/>
</dbReference>
<dbReference type="NCBIfam" id="NF001591">
    <property type="entry name" value="PRK00393.1"/>
    <property type="match status" value="1"/>
</dbReference>
<dbReference type="NCBIfam" id="TIGR00505">
    <property type="entry name" value="ribA"/>
    <property type="match status" value="1"/>
</dbReference>
<dbReference type="NCBIfam" id="TIGR00506">
    <property type="entry name" value="ribB"/>
    <property type="match status" value="1"/>
</dbReference>
<dbReference type="PANTHER" id="PTHR21327:SF18">
    <property type="entry name" value="3,4-DIHYDROXY-2-BUTANONE 4-PHOSPHATE SYNTHASE"/>
    <property type="match status" value="1"/>
</dbReference>
<dbReference type="PANTHER" id="PTHR21327">
    <property type="entry name" value="GTP CYCLOHYDROLASE II-RELATED"/>
    <property type="match status" value="1"/>
</dbReference>
<dbReference type="Pfam" id="PF00926">
    <property type="entry name" value="DHBP_synthase"/>
    <property type="match status" value="1"/>
</dbReference>
<dbReference type="Pfam" id="PF00925">
    <property type="entry name" value="GTP_cyclohydro2"/>
    <property type="match status" value="1"/>
</dbReference>
<dbReference type="PIRSF" id="PIRSF001259">
    <property type="entry name" value="RibA"/>
    <property type="match status" value="1"/>
</dbReference>
<dbReference type="SUPFAM" id="SSF142695">
    <property type="entry name" value="RibA-like"/>
    <property type="match status" value="1"/>
</dbReference>
<dbReference type="SUPFAM" id="SSF55821">
    <property type="entry name" value="YrdC/RibB"/>
    <property type="match status" value="1"/>
</dbReference>
<protein>
    <recommendedName>
        <fullName evidence="1">Riboflavin biosynthesis protein RibBA</fullName>
    </recommendedName>
    <domain>
        <recommendedName>
            <fullName evidence="1">3,4-dihydroxy-2-butanone 4-phosphate synthase</fullName>
            <shortName evidence="1">DHBP synthase</shortName>
            <ecNumber evidence="1">4.1.99.12</ecNumber>
        </recommendedName>
    </domain>
    <domain>
        <recommendedName>
            <fullName evidence="1">GTP cyclohydrolase-2</fullName>
            <ecNumber evidence="1">3.5.4.25</ecNumber>
        </recommendedName>
        <alternativeName>
            <fullName evidence="1">GTP cyclohydrolase II</fullName>
        </alternativeName>
    </domain>
</protein>
<keyword id="KW-0342">GTP-binding</keyword>
<keyword id="KW-0378">Hydrolase</keyword>
<keyword id="KW-0456">Lyase</keyword>
<keyword id="KW-0460">Magnesium</keyword>
<keyword id="KW-0464">Manganese</keyword>
<keyword id="KW-0479">Metal-binding</keyword>
<keyword id="KW-0511">Multifunctional enzyme</keyword>
<keyword id="KW-0547">Nucleotide-binding</keyword>
<keyword id="KW-1185">Reference proteome</keyword>
<keyword id="KW-0686">Riboflavin biosynthesis</keyword>
<keyword id="KW-0862">Zinc</keyword>